<keyword id="KW-0002">3D-structure</keyword>
<keyword id="KW-0010">Activator</keyword>
<keyword id="KW-0025">Alternative splicing</keyword>
<keyword id="KW-0175">Coiled coil</keyword>
<keyword id="KW-0221">Differentiation</keyword>
<keyword id="KW-0238">DNA-binding</keyword>
<keyword id="KW-0539">Nucleus</keyword>
<keyword id="KW-0597">Phosphoprotein</keyword>
<keyword id="KW-1185">Reference proteome</keyword>
<keyword id="KW-0804">Transcription</keyword>
<keyword id="KW-0805">Transcription regulation</keyword>
<proteinExistence type="evidence at protein level"/>
<gene>
    <name evidence="18 21" type="primary">Sox5</name>
    <name evidence="17" type="synonym">Sox-5</name>
</gene>
<accession>P35710</accession>
<accession>O88184</accession>
<accession>O89018</accession>
<reference key="1">
    <citation type="journal article" date="1992" name="EMBO J.">
        <title>An SRY-related gene expressed during spermatogenesis in the mouse encodes a sequence-specific DNA-binding protein.</title>
        <authorList>
            <person name="Denny P."/>
            <person name="Swift S."/>
            <person name="Connor F."/>
            <person name="Ashworth A."/>
        </authorList>
    </citation>
    <scope>NUCLEOTIDE SEQUENCE [MRNA] (ISOFORM 3)</scope>
    <scope>FUNCTION</scope>
    <scope>TISSUE SPECIFICITY</scope>
    <scope>DEVELOPMENTAL STAGE</scope>
    <source>
        <tissue>Brain</tissue>
        <tissue>Testis</tissue>
    </source>
</reference>
<reference key="2">
    <citation type="journal article" date="1998" name="Biochim. Biophys. Acta">
        <title>The mouse Sox5 gene encodes a protein containing the leucine zipper and the Q box.</title>
        <authorList>
            <person name="Hiraoka Y."/>
            <person name="Ogawa M."/>
            <person name="Sakai Y."/>
            <person name="Kido S."/>
            <person name="Aiso S."/>
        </authorList>
    </citation>
    <scope>NUCLEOTIDE SEQUENCE [MRNA] (ISOFORM 1)</scope>
    <scope>TISSUE SPECIFICITY</scope>
    <source>
        <tissue>Embryo</tissue>
    </source>
</reference>
<reference key="3">
    <citation type="journal article" date="1998" name="EMBO J.">
        <title>A new long form of Sox5 (L-Sox5), Sox6 and Sox9 are coexpressed in chondrogenesis and cooperatively activate the type II collagen gene.</title>
        <authorList>
            <person name="Lefebvre V."/>
            <person name="Li P."/>
            <person name="de Crombrugghe B."/>
        </authorList>
    </citation>
    <scope>NUCLEOTIDE SEQUENCE [MRNA] (ISOFORM 2)</scope>
    <scope>FUNCTION</scope>
    <scope>SUBCELLULAR LOCATION</scope>
    <scope>SUBUNIT</scope>
    <scope>TISSUE SPECIFICITY</scope>
</reference>
<reference key="4">
    <citation type="journal article" date="1994" name="Nucleic Acids Res.">
        <title>DNA binding and bending properties of the post-meiotically expressed Sry-related protein Sox-5.</title>
        <authorList>
            <person name="Connor F."/>
            <person name="O'Cary P.D."/>
            <person name="Read C.M."/>
            <person name="Preston N.S."/>
            <person name="Driscoll P.C."/>
            <person name="Denny P."/>
            <person name="Crane-Robinson C."/>
            <person name="Ashworth A."/>
        </authorList>
    </citation>
    <scope>FUNCTION</scope>
</reference>
<reference key="5">
    <citation type="journal article" date="2001" name="Dev. Cell">
        <title>The transcription factors L-Sox5 and Sox6 are essential for cartilage formation.</title>
        <authorList>
            <person name="Smits P."/>
            <person name="Li P."/>
            <person name="Mandel J."/>
            <person name="Zhang Z."/>
            <person name="Deng J.M."/>
            <person name="Behringer R.R."/>
            <person name="de Crombrugghe B."/>
            <person name="Lefebvre V."/>
        </authorList>
    </citation>
    <scope>FUNCTION</scope>
    <scope>DISRUPTION PHENOTYPE</scope>
</reference>
<reference key="6">
    <citation type="journal article" date="2002" name="Genes Dev.">
        <title>The transcription factor Sox9 has essential roles in successive steps of the chondrocyte differentiation pathway and is required for expression of Sox5 and Sox6.</title>
        <authorList>
            <person name="Akiyama H."/>
            <person name="Chaboissier M.C."/>
            <person name="Martin J.F."/>
            <person name="Schedl A."/>
            <person name="de Crombrugghe B."/>
        </authorList>
    </citation>
    <scope>INDUCTION</scope>
</reference>
<reference key="7">
    <citation type="journal article" date="2004" name="Arthritis Rheum.">
        <title>The combination of SOX5, SOX6, and SOX9 (the SOX trio) provides signals sufficient for induction of permanent cartilage.</title>
        <authorList>
            <person name="Ikeda T."/>
            <person name="Kamekura S."/>
            <person name="Mabuchi A."/>
            <person name="Kou I."/>
            <person name="Seki S."/>
            <person name="Takato T."/>
            <person name="Nakamura K."/>
            <person name="Kawaguchi H."/>
            <person name="Ikegawa S."/>
            <person name="Chung U.I."/>
        </authorList>
    </citation>
    <scope>FUNCTION</scope>
</reference>
<reference key="8">
    <citation type="journal article" date="2004" name="J. Cell Biol.">
        <title>Sox5 and Sox6 are needed to develop and maintain source, columnar, and hypertrophic chondrocytes in the cartilage growth plate.</title>
        <authorList>
            <person name="Smits P."/>
            <person name="Dy P."/>
            <person name="Mitra S."/>
            <person name="Lefebvre V."/>
        </authorList>
    </citation>
    <scope>FUNCTION</scope>
    <scope>DISRUPTION PHENOTYPE</scope>
</reference>
<reference key="9">
    <citation type="journal article" date="2010" name="Cell">
        <title>A tissue-specific atlas of mouse protein phosphorylation and expression.</title>
        <authorList>
            <person name="Huttlin E.L."/>
            <person name="Jedrychowski M.P."/>
            <person name="Elias J.E."/>
            <person name="Goswami T."/>
            <person name="Rad R."/>
            <person name="Beausoleil S.A."/>
            <person name="Villen J."/>
            <person name="Haas W."/>
            <person name="Sowa M.E."/>
            <person name="Gygi S.P."/>
        </authorList>
    </citation>
    <scope>IDENTIFICATION BY MASS SPECTROMETRY [LARGE SCALE ANALYSIS]</scope>
    <source>
        <tissue>Brain</tissue>
        <tissue>Brown adipose tissue</tissue>
        <tissue>Kidney</tissue>
    </source>
</reference>
<reference key="10">
    <citation type="journal article" date="2015" name="Nucleic Acids Res.">
        <title>The transcription factors SOX9 and SOX5/SOX6 cooperate genome-wide through super-enhancers to drive chondrogenesis.</title>
        <authorList>
            <person name="Liu C.F."/>
            <person name="Lefebvre V."/>
        </authorList>
    </citation>
    <scope>FUNCTION</scope>
    <scope>DNA-BINDING</scope>
</reference>
<reference key="11">
    <citation type="journal article" date="2016" name="J. Neurochem.">
        <title>Sox13 functionally complements the related Sox5 and Sox6 as important developmental modulators in mouse spinal cord oligodendrocytes.</title>
        <authorList>
            <person name="Baroti T."/>
            <person name="Schillinger A."/>
            <person name="Wegner M."/>
            <person name="Stolt C.C."/>
        </authorList>
    </citation>
    <scope>FUNCTION</scope>
</reference>
<reference key="12">
    <citation type="journal article" date="2016" name="PLoS Genet.">
        <title>Comparative Transcriptomic and Epigenomic Analyses Reveal New Regulators of Murine Brown Adipogenesis.</title>
        <authorList>
            <person name="Brunmeir R."/>
            <person name="Wu J."/>
            <person name="Peng X."/>
            <person name="Kim S.Y."/>
            <person name="Julien S.G."/>
            <person name="Zhang Q."/>
            <person name="Xie W."/>
            <person name="Xu F."/>
        </authorList>
    </citation>
    <scope>DEVELOPMENTAL STAGE</scope>
</reference>
<reference key="13">
    <citation type="journal article" date="2001" name="Protein Sci.">
        <title>Solution structure and backbone dynamics of the DNA-binding domain of mouse Sox-5.</title>
        <authorList>
            <person name="Cary P.D."/>
            <person name="Read C.M."/>
            <person name="Davis B."/>
            <person name="Driscoll P.C."/>
            <person name="Crane-Robinson C."/>
        </authorList>
    </citation>
    <scope>STRUCTURE BY NMR OF 554-632</scope>
</reference>
<feature type="chain" id="PRO_0000048727" description="Transcription factor SOX-5">
    <location>
        <begin position="1"/>
        <end position="763"/>
    </location>
</feature>
<feature type="DNA-binding region" description="HMG box" evidence="3">
    <location>
        <begin position="556"/>
        <end position="624"/>
    </location>
</feature>
<feature type="region of interest" description="Disordered" evidence="4">
    <location>
        <begin position="1"/>
        <end position="30"/>
    </location>
</feature>
<feature type="region of interest" description="Disordered" evidence="4">
    <location>
        <begin position="76"/>
        <end position="139"/>
    </location>
</feature>
<feature type="region of interest" description="Disordered" evidence="4">
    <location>
        <begin position="369"/>
        <end position="426"/>
    </location>
</feature>
<feature type="region of interest" description="Disordered" evidence="4">
    <location>
        <begin position="708"/>
        <end position="763"/>
    </location>
</feature>
<feature type="coiled-coil region" evidence="2">
    <location>
        <begin position="193"/>
        <end position="274"/>
    </location>
</feature>
<feature type="coiled-coil region" evidence="2">
    <location>
        <begin position="448"/>
        <end position="515"/>
    </location>
</feature>
<feature type="compositionally biased region" description="Polar residues" evidence="4">
    <location>
        <begin position="76"/>
        <end position="89"/>
    </location>
</feature>
<feature type="compositionally biased region" description="Low complexity" evidence="4">
    <location>
        <begin position="99"/>
        <end position="109"/>
    </location>
</feature>
<feature type="compositionally biased region" description="Basic and acidic residues" evidence="4">
    <location>
        <begin position="716"/>
        <end position="726"/>
    </location>
</feature>
<feature type="compositionally biased region" description="Acidic residues" evidence="4">
    <location>
        <begin position="727"/>
        <end position="752"/>
    </location>
</feature>
<feature type="modified residue" description="Phosphoserine" evidence="1">
    <location>
        <position position="21"/>
    </location>
</feature>
<feature type="modified residue" description="Phosphothreonine" evidence="1">
    <location>
        <position position="131"/>
    </location>
</feature>
<feature type="modified residue" description="Phosphoserine" evidence="1">
    <location>
        <position position="370"/>
    </location>
</feature>
<feature type="modified residue" description="Phosphothreonine" evidence="1">
    <location>
        <position position="372"/>
    </location>
</feature>
<feature type="modified residue" description="Phosphoserine" evidence="1">
    <location>
        <position position="411"/>
    </location>
</feature>
<feature type="modified residue" description="Phosphoserine" evidence="1">
    <location>
        <position position="414"/>
    </location>
</feature>
<feature type="modified residue" description="Phosphoserine" evidence="1">
    <location>
        <position position="439"/>
    </location>
</feature>
<feature type="splice variant" id="VSP_007265" description="In isoform 3." evidence="17">
    <location>
        <begin position="1"/>
        <end position="322"/>
    </location>
</feature>
<feature type="splice variant" id="VSP_007266" description="In isoform 2." evidence="19">
    <location>
        <begin position="56"/>
        <end position="90"/>
    </location>
</feature>
<feature type="splice variant" id="VSP_007267" description="In isoform 2 and isoform 3." evidence="17 19">
    <location>
        <begin position="340"/>
        <end position="388"/>
    </location>
</feature>
<feature type="sequence conflict" description="In Ref. 3; CAA09269." evidence="20" ref="3">
    <original>S</original>
    <variation>A</variation>
    <location>
        <position position="102"/>
    </location>
</feature>
<feature type="sequence conflict" description="In Ref. 1; CAA46608." evidence="20" ref="1">
    <original>S</original>
    <variation>G</variation>
    <location>
        <position position="679"/>
    </location>
</feature>
<feature type="helix" evidence="22">
    <location>
        <begin position="562"/>
        <end position="575"/>
    </location>
</feature>
<feature type="helix" evidence="22">
    <location>
        <begin position="583"/>
        <end position="594"/>
    </location>
</feature>
<feature type="helix" evidence="22">
    <location>
        <begin position="600"/>
        <end position="602"/>
    </location>
</feature>
<feature type="helix" evidence="22">
    <location>
        <begin position="603"/>
        <end position="617"/>
    </location>
</feature>
<evidence type="ECO:0000250" key="1">
    <source>
        <dbReference type="UniProtKB" id="P35711"/>
    </source>
</evidence>
<evidence type="ECO:0000255" key="2"/>
<evidence type="ECO:0000255" key="3">
    <source>
        <dbReference type="PROSITE-ProRule" id="PRU00267"/>
    </source>
</evidence>
<evidence type="ECO:0000256" key="4">
    <source>
        <dbReference type="SAM" id="MobiDB-lite"/>
    </source>
</evidence>
<evidence type="ECO:0000269" key="5">
    <source>
    </source>
</evidence>
<evidence type="ECO:0000269" key="6">
    <source>
    </source>
</evidence>
<evidence type="ECO:0000269" key="7">
    <source>
    </source>
</evidence>
<evidence type="ECO:0000269" key="8">
    <source>
    </source>
</evidence>
<evidence type="ECO:0000269" key="9">
    <source>
    </source>
</evidence>
<evidence type="ECO:0000269" key="10">
    <source>
    </source>
</evidence>
<evidence type="ECO:0000269" key="11">
    <source>
    </source>
</evidence>
<evidence type="ECO:0000269" key="12">
    <source>
    </source>
</evidence>
<evidence type="ECO:0000269" key="13">
    <source>
    </source>
</evidence>
<evidence type="ECO:0000269" key="14">
    <source>
    </source>
</evidence>
<evidence type="ECO:0000269" key="15">
    <source>
    </source>
</evidence>
<evidence type="ECO:0000303" key="16">
    <source>
    </source>
</evidence>
<evidence type="ECO:0000303" key="17">
    <source>
    </source>
</evidence>
<evidence type="ECO:0000303" key="18">
    <source>
    </source>
</evidence>
<evidence type="ECO:0000303" key="19">
    <source>
    </source>
</evidence>
<evidence type="ECO:0000305" key="20"/>
<evidence type="ECO:0000312" key="21">
    <source>
        <dbReference type="MGI" id="MGI:98367"/>
    </source>
</evidence>
<evidence type="ECO:0007829" key="22">
    <source>
        <dbReference type="PDB" id="1I11"/>
    </source>
</evidence>
<organism>
    <name type="scientific">Mus musculus</name>
    <name type="common">Mouse</name>
    <dbReference type="NCBI Taxonomy" id="10090"/>
    <lineage>
        <taxon>Eukaryota</taxon>
        <taxon>Metazoa</taxon>
        <taxon>Chordata</taxon>
        <taxon>Craniata</taxon>
        <taxon>Vertebrata</taxon>
        <taxon>Euteleostomi</taxon>
        <taxon>Mammalia</taxon>
        <taxon>Eutheria</taxon>
        <taxon>Euarchontoglires</taxon>
        <taxon>Glires</taxon>
        <taxon>Rodentia</taxon>
        <taxon>Myomorpha</taxon>
        <taxon>Muroidea</taxon>
        <taxon>Muridae</taxon>
        <taxon>Murinae</taxon>
        <taxon>Mus</taxon>
        <taxon>Mus</taxon>
    </lineage>
</organism>
<name>SOX5_MOUSE</name>
<comment type="function">
    <text evidence="5 7 8 9 10 11 13 15">Transcription factor involved in chondrocytes differentiation and cartilage formation (PubMed:11702786, PubMed:1396566, PubMed:14993235, PubMed:15529345, PubMed:8078769). Specifically binds the 5'-AACAAT-3' DNA motif present in enhancers and super-enhancers and promotes expression of genes important for chondrogenesis, including cartilage matrix protein-coding genes, such as COL2A1 and AGC1 (PubMed:11702786, PubMed:26150426, PubMed:9755172). Required for overt chondrogenesis when condensed prechondrocytes differentiate into early stage chondrocytes: SOX5 and SOX6 cooperatively bind with SOX9 on active enhancers and super-enhancers associated with cartilage-specific genes, and thereby potentiate SOX9's ability to transactivate (PubMed:11702786, PubMed:14993235, PubMed:15529345, PubMed:26150426). Not involved in precartilaginous condensation, the first step in chondrogenesis, during which skeletal progenitors differentiate into prechondrocytes (PubMed:14993235). Together with SOX6, required to form and maintain a pool of highly proliferating chondroblasts between epiphyses and metaphyses, to form columnar chondroblasts, delay chondrocyte prehypertrophy but promote hypertrophy, and to delay terminal differentiation of chondrocytes on contact with ossification fronts (PubMed:14993235). Binds to the proximal promoter region of the myelin protein MPZ gene (PubMed:26525805).</text>
</comment>
<comment type="subunit">
    <text evidence="15">Forms homodimers and heterodimers with SOX6.</text>
</comment>
<comment type="subcellular location">
    <subcellularLocation>
        <location evidence="15">Nucleus</location>
    </subcellularLocation>
</comment>
<comment type="alternative products">
    <event type="alternative splicing"/>
    <isoform>
        <id>P35710-1</id>
        <name>1</name>
        <sequence type="displayed"/>
    </isoform>
    <isoform>
        <id>P35710-2</id>
        <name>2</name>
        <name evidence="16 19">L-Sox5</name>
        <sequence type="described" ref="VSP_007266 VSP_007267"/>
    </isoform>
    <isoform>
        <id>P35710-3</id>
        <name>3</name>
        <sequence type="described" ref="VSP_007265 VSP_007267"/>
    </isoform>
</comment>
<comment type="tissue specificity">
    <molecule>Isoform 1</molecule>
    <text evidence="14">Expressed in the embryo and in adult testis.</text>
</comment>
<comment type="tissue specificity">
    <molecule>Isoform 2</molecule>
    <text evidence="15">Expressed in chondrocytes and, to a lesser extent, in brain.</text>
</comment>
<comment type="tissue specificity">
    <molecule>Isoform 3</molecule>
    <text evidence="7">Testis-specific.</text>
</comment>
<comment type="developmental stage">
    <text evidence="12">Expression is transiently increased during brown adipocyte differentiation.</text>
</comment>
<comment type="developmental stage">
    <molecule>Isoform 3</molecule>
    <text evidence="7">Expressed during spermatogenesis.</text>
</comment>
<comment type="induction">
    <text evidence="6">Expression is dependent on SOX9.</text>
</comment>
<comment type="disruption phenotype">
    <text evidence="5 8">Newborn mice display mild skeletal abnormalities (PubMed:11702786). Mice lacking both Sox5 and Sox6 develop a severe chondrodysplasia characterized by the virtual absence of cartilage: chondrogenic cells are largely arrested at the stage of chondrogenic mesenchymal condensations (PubMed:11702786). Embryos lacking Sox5 (homozygous knockout) and heterozygous for Sox6 live until birth and show severe growth plate chondrocyte defects (PubMed:14993235). Embryos lacking Sox6 (homozygous knockout) and heterozygous for Sox5 live until birth and show severe growth plate chondrocyte defects (PubMed:14993235).</text>
</comment>
<protein>
    <recommendedName>
        <fullName evidence="20">Transcription factor SOX-5</fullName>
    </recommendedName>
</protein>
<sequence>MLTDPDLPQEFERMSSKRPASPYGETDGEVAMVTSRQKVEEEESERLPAFHLPLHVSFPNKPHSEEFQPVSLLTQETCGPRTPTVQHNTMEVDGNKVMSSLSPYNSSTSPQKAEEGGRQSGESVSSAALGTPERRKGSLADVVDTLKQRKMEELIKNEPEDTPSIEKLLSKDWKDKLLAMGSGNFGEIKGTPESLAEKERQLMGMINQLTSLREQLLAAHDEQKKLAASQIEKQRQQMELAKQQQEQIARQQQQLLQQQHKINLLQQQIQVQGQLPPLMIPVFPPDQRTLAAAAQQGFLLPPGFSYKAGCSDPYPVQLIPTTMAAAAAATPGLGPLQLQQFYAAQLAAMQVSPGGKLLGLPQGNLGAAVSPTSIHTDKSTNSPPPKSKDEVAQPLNLSAKPKTSDGKSPASPTSPHMPALRINSGAGPLKASVPAALASPSARVSTIGYLNDHDAVTKAIQEARQMKEQLRREQQALDGKVAVVNSIGLSNCRTEKEKTTLESLTQQLAVKQNEEGKFSHGMMDFNMSGDSDGSAGVSESRIYRESRGRGSNEPHIKRPMNAFMVWAKDERRKILQAFPDMHNSNISKILGSRWKAMTNLEKQPYYEEQARLSKQHLEKYPDYKYKPRPKRTCLVDGKKLRIGEYKAIMRNRRQEMRQYFNVGQQAQIPIATAGVVYPSAIAMAGMPSPHLPSEHSSVSSSPEPGMPVIQSTYGAKGEEPHIKEEIQAEDINGEIYEEYDEEEEDPDVDYGSDSENHIAGQAN</sequence>
<dbReference type="EMBL" id="X65657">
    <property type="protein sequence ID" value="CAA46608.1"/>
    <property type="molecule type" value="mRNA"/>
</dbReference>
<dbReference type="EMBL" id="X65658">
    <property type="protein sequence ID" value="CAA46609.1"/>
    <property type="molecule type" value="mRNA"/>
</dbReference>
<dbReference type="EMBL" id="AB006330">
    <property type="protein sequence ID" value="BAA32567.1"/>
    <property type="molecule type" value="mRNA"/>
</dbReference>
<dbReference type="EMBL" id="AJ010604">
    <property type="protein sequence ID" value="CAA09269.1"/>
    <property type="molecule type" value="mRNA"/>
</dbReference>
<dbReference type="CCDS" id="CCDS39702.1">
    <molecule id="P35710-1"/>
</dbReference>
<dbReference type="CCDS" id="CCDS57469.1">
    <molecule id="P35710-2"/>
</dbReference>
<dbReference type="CCDS" id="CCDS85183.1">
    <molecule id="P35710-3"/>
</dbReference>
<dbReference type="PIR" id="S25195">
    <property type="entry name" value="S25195"/>
</dbReference>
<dbReference type="RefSeq" id="NP_001230092.1">
    <property type="nucleotide sequence ID" value="NM_001243163.1"/>
</dbReference>
<dbReference type="RefSeq" id="NP_001334435.1">
    <molecule id="P35710-3"/>
    <property type="nucleotide sequence ID" value="NM_001347506.1"/>
</dbReference>
<dbReference type="PDB" id="1I11">
    <property type="method" value="NMR"/>
    <property type="chains" value="A=554-632"/>
</dbReference>
<dbReference type="PDBsum" id="1I11"/>
<dbReference type="BMRB" id="P35710"/>
<dbReference type="SMR" id="P35710"/>
<dbReference type="BioGRID" id="203409">
    <property type="interactions" value="2"/>
</dbReference>
<dbReference type="FunCoup" id="P35710">
    <property type="interactions" value="832"/>
</dbReference>
<dbReference type="IntAct" id="P35710">
    <property type="interactions" value="1"/>
</dbReference>
<dbReference type="STRING" id="10090.ENSMUSP00000047567"/>
<dbReference type="ChEMBL" id="CHEMBL2176780"/>
<dbReference type="GlyGen" id="P35710">
    <property type="glycosylation" value="1 site"/>
</dbReference>
<dbReference type="iPTMnet" id="P35710"/>
<dbReference type="PhosphoSitePlus" id="P35710"/>
<dbReference type="jPOST" id="P35710"/>
<dbReference type="PaxDb" id="10090-ENSMUSP00000047567"/>
<dbReference type="PeptideAtlas" id="P35710"/>
<dbReference type="ProteomicsDB" id="261481">
    <molecule id="P35710-1"/>
</dbReference>
<dbReference type="ProteomicsDB" id="261482">
    <molecule id="P35710-2"/>
</dbReference>
<dbReference type="ProteomicsDB" id="261483">
    <molecule id="P35710-3"/>
</dbReference>
<dbReference type="Antibodypedia" id="12481">
    <property type="antibodies" value="247 antibodies from 30 providers"/>
</dbReference>
<dbReference type="DNASU" id="20678"/>
<dbReference type="Ensembl" id="ENSMUST00000111748.8">
    <molecule id="P35710-3"/>
    <property type="protein sequence ID" value="ENSMUSP00000107377.2"/>
    <property type="gene ID" value="ENSMUSG00000041540.17"/>
</dbReference>
<dbReference type="GeneID" id="20678"/>
<dbReference type="KEGG" id="mmu:20678"/>
<dbReference type="AGR" id="MGI:98367"/>
<dbReference type="CTD" id="6660"/>
<dbReference type="MGI" id="MGI:98367">
    <property type="gene designation" value="Sox5"/>
</dbReference>
<dbReference type="VEuPathDB" id="HostDB:ENSMUSG00000041540"/>
<dbReference type="eggNOG" id="KOG0528">
    <property type="taxonomic scope" value="Eukaryota"/>
</dbReference>
<dbReference type="GeneTree" id="ENSGT00940000156122"/>
<dbReference type="HOGENOM" id="CLU_018522_0_1_1"/>
<dbReference type="InParanoid" id="P35710"/>
<dbReference type="OrthoDB" id="6247875at2759"/>
<dbReference type="PhylomeDB" id="P35710"/>
<dbReference type="BioGRID-ORCS" id="20678">
    <property type="hits" value="2 hits in 78 CRISPR screens"/>
</dbReference>
<dbReference type="ChiTaRS" id="Sox5">
    <property type="organism name" value="mouse"/>
</dbReference>
<dbReference type="EvolutionaryTrace" id="P35710"/>
<dbReference type="PRO" id="PR:P35710"/>
<dbReference type="Proteomes" id="UP000000589">
    <property type="component" value="Chromosome 6"/>
</dbReference>
<dbReference type="RNAct" id="P35710">
    <property type="molecule type" value="protein"/>
</dbReference>
<dbReference type="Bgee" id="ENSMUSG00000041540">
    <property type="expression patterns" value="Expressed in cortical plate and 217 other cell types or tissues"/>
</dbReference>
<dbReference type="ExpressionAtlas" id="P35710">
    <property type="expression patterns" value="baseline and differential"/>
</dbReference>
<dbReference type="GO" id="GO:0005634">
    <property type="term" value="C:nucleus"/>
    <property type="evidence" value="ECO:0000314"/>
    <property type="project" value="MGI"/>
</dbReference>
<dbReference type="GO" id="GO:0005667">
    <property type="term" value="C:transcription regulator complex"/>
    <property type="evidence" value="ECO:0000314"/>
    <property type="project" value="MGI"/>
</dbReference>
<dbReference type="GO" id="GO:0003700">
    <property type="term" value="F:DNA-binding transcription factor activity"/>
    <property type="evidence" value="ECO:0000314"/>
    <property type="project" value="MGI"/>
</dbReference>
<dbReference type="GO" id="GO:0000981">
    <property type="term" value="F:DNA-binding transcription factor activity, RNA polymerase II-specific"/>
    <property type="evidence" value="ECO:0000314"/>
    <property type="project" value="MGI"/>
</dbReference>
<dbReference type="GO" id="GO:0000978">
    <property type="term" value="F:RNA polymerase II cis-regulatory region sequence-specific DNA binding"/>
    <property type="evidence" value="ECO:0000314"/>
    <property type="project" value="MGI"/>
</dbReference>
<dbReference type="GO" id="GO:0000976">
    <property type="term" value="F:transcription cis-regulatory region binding"/>
    <property type="evidence" value="ECO:0000314"/>
    <property type="project" value="MGI"/>
</dbReference>
<dbReference type="GO" id="GO:0001502">
    <property type="term" value="P:cartilage condensation"/>
    <property type="evidence" value="ECO:0000315"/>
    <property type="project" value="UniProtKB"/>
</dbReference>
<dbReference type="GO" id="GO:0051216">
    <property type="term" value="P:cartilage development"/>
    <property type="evidence" value="ECO:0000314"/>
    <property type="project" value="UniProtKB"/>
</dbReference>
<dbReference type="GO" id="GO:0045165">
    <property type="term" value="P:cell fate commitment"/>
    <property type="evidence" value="ECO:0000316"/>
    <property type="project" value="MGI"/>
</dbReference>
<dbReference type="GO" id="GO:0021953">
    <property type="term" value="P:central nervous system neuron differentiation"/>
    <property type="evidence" value="ECO:0000316"/>
    <property type="project" value="MGI"/>
</dbReference>
<dbReference type="GO" id="GO:0002062">
    <property type="term" value="P:chondrocyte differentiation"/>
    <property type="evidence" value="ECO:0000315"/>
    <property type="project" value="UniProtKB"/>
</dbReference>
<dbReference type="GO" id="GO:0001701">
    <property type="term" value="P:in utero embryonic development"/>
    <property type="evidence" value="ECO:0000315"/>
    <property type="project" value="MGI"/>
</dbReference>
<dbReference type="GO" id="GO:0045892">
    <property type="term" value="P:negative regulation of DNA-templated transcription"/>
    <property type="evidence" value="ECO:0000314"/>
    <property type="project" value="MGI"/>
</dbReference>
<dbReference type="GO" id="GO:0048709">
    <property type="term" value="P:oligodendrocyte differentiation"/>
    <property type="evidence" value="ECO:0000315"/>
    <property type="project" value="MGI"/>
</dbReference>
<dbReference type="GO" id="GO:0032332">
    <property type="term" value="P:positive regulation of chondrocyte differentiation"/>
    <property type="evidence" value="ECO:0000314"/>
    <property type="project" value="UniProtKB"/>
</dbReference>
<dbReference type="GO" id="GO:0045944">
    <property type="term" value="P:positive regulation of transcription by RNA polymerase II"/>
    <property type="evidence" value="ECO:0000314"/>
    <property type="project" value="MGI"/>
</dbReference>
<dbReference type="GO" id="GO:0060164">
    <property type="term" value="P:regulation of timing of neuron differentiation"/>
    <property type="evidence" value="ECO:0000315"/>
    <property type="project" value="MGI"/>
</dbReference>
<dbReference type="CDD" id="cd22042">
    <property type="entry name" value="HMG-box_EGL13-like"/>
    <property type="match status" value="1"/>
</dbReference>
<dbReference type="FunFam" id="1.10.30.10:FF:000003">
    <property type="entry name" value="Putative transcription factor SOX-6"/>
    <property type="match status" value="1"/>
</dbReference>
<dbReference type="Gene3D" id="1.10.30.10">
    <property type="entry name" value="High mobility group box domain"/>
    <property type="match status" value="1"/>
</dbReference>
<dbReference type="InterPro" id="IPR009071">
    <property type="entry name" value="HMG_box_dom"/>
</dbReference>
<dbReference type="InterPro" id="IPR036910">
    <property type="entry name" value="HMG_box_dom_sf"/>
</dbReference>
<dbReference type="InterPro" id="IPR051356">
    <property type="entry name" value="SOX/SOX-like_TF"/>
</dbReference>
<dbReference type="PANTHER" id="PTHR45789">
    <property type="entry name" value="FI18025P1"/>
    <property type="match status" value="1"/>
</dbReference>
<dbReference type="PANTHER" id="PTHR45789:SF3">
    <property type="entry name" value="TRANSCRIPTION FACTOR SOX-5"/>
    <property type="match status" value="1"/>
</dbReference>
<dbReference type="Pfam" id="PF00505">
    <property type="entry name" value="HMG_box"/>
    <property type="match status" value="1"/>
</dbReference>
<dbReference type="SMART" id="SM00398">
    <property type="entry name" value="HMG"/>
    <property type="match status" value="1"/>
</dbReference>
<dbReference type="SUPFAM" id="SSF47095">
    <property type="entry name" value="HMG-box"/>
    <property type="match status" value="1"/>
</dbReference>
<dbReference type="PROSITE" id="PS50118">
    <property type="entry name" value="HMG_BOX_2"/>
    <property type="match status" value="1"/>
</dbReference>